<name>RS11_AZOC5</name>
<evidence type="ECO:0000255" key="1">
    <source>
        <dbReference type="HAMAP-Rule" id="MF_01310"/>
    </source>
</evidence>
<evidence type="ECO:0000305" key="2"/>
<comment type="function">
    <text evidence="1">Located on the platform of the 30S subunit, it bridges several disparate RNA helices of the 16S rRNA. Forms part of the Shine-Dalgarno cleft in the 70S ribosome.</text>
</comment>
<comment type="subunit">
    <text evidence="1">Part of the 30S ribosomal subunit. Interacts with proteins S7 and S18. Binds to IF-3.</text>
</comment>
<comment type="similarity">
    <text evidence="1">Belongs to the universal ribosomal protein uS11 family.</text>
</comment>
<proteinExistence type="inferred from homology"/>
<organism>
    <name type="scientific">Azorhizobium caulinodans (strain ATCC 43989 / DSM 5975 / JCM 20966 / LMG 6465 / NBRC 14845 / NCIMB 13405 / ORS 571)</name>
    <dbReference type="NCBI Taxonomy" id="438753"/>
    <lineage>
        <taxon>Bacteria</taxon>
        <taxon>Pseudomonadati</taxon>
        <taxon>Pseudomonadota</taxon>
        <taxon>Alphaproteobacteria</taxon>
        <taxon>Hyphomicrobiales</taxon>
        <taxon>Xanthobacteraceae</taxon>
        <taxon>Azorhizobium</taxon>
    </lineage>
</organism>
<accession>A8IAN8</accession>
<protein>
    <recommendedName>
        <fullName evidence="1">Small ribosomal subunit protein uS11</fullName>
    </recommendedName>
    <alternativeName>
        <fullName evidence="2">30S ribosomal protein S11</fullName>
    </alternativeName>
</protein>
<reference key="1">
    <citation type="submission" date="2007-04" db="EMBL/GenBank/DDBJ databases">
        <title>Complete genome sequence of the nitrogen-fixing bacterium Azorhizobium caulinodans ORS571.</title>
        <authorList>
            <person name="Lee K.B."/>
            <person name="Backer P.D."/>
            <person name="Aono T."/>
            <person name="Liu C.T."/>
            <person name="Suzuki S."/>
            <person name="Suzuki T."/>
            <person name="Kaneko T."/>
            <person name="Yamada M."/>
            <person name="Tabata S."/>
            <person name="Kupfer D.M."/>
            <person name="Najar F.Z."/>
            <person name="Wiley G.B."/>
            <person name="Roe B."/>
            <person name="Binnewies T."/>
            <person name="Ussery D."/>
            <person name="Vereecke D."/>
            <person name="Gevers D."/>
            <person name="Holsters M."/>
            <person name="Oyaizu H."/>
        </authorList>
    </citation>
    <scope>NUCLEOTIDE SEQUENCE [LARGE SCALE GENOMIC DNA]</scope>
    <source>
        <strain>ATCC 43989 / DSM 5975 / JCM 20966 / LMG 6465 / NBRC 14845 / NCIMB 13405 / ORS 571</strain>
    </source>
</reference>
<gene>
    <name evidence="1" type="primary">rpsK</name>
    <name type="ordered locus">AZC_2531</name>
</gene>
<feature type="chain" id="PRO_1000073200" description="Small ribosomal subunit protein uS11">
    <location>
        <begin position="1"/>
        <end position="129"/>
    </location>
</feature>
<keyword id="KW-1185">Reference proteome</keyword>
<keyword id="KW-0687">Ribonucleoprotein</keyword>
<keyword id="KW-0689">Ribosomal protein</keyword>
<keyword id="KW-0694">RNA-binding</keyword>
<keyword id="KW-0699">rRNA-binding</keyword>
<dbReference type="EMBL" id="AP009384">
    <property type="protein sequence ID" value="BAF88529.1"/>
    <property type="molecule type" value="Genomic_DNA"/>
</dbReference>
<dbReference type="RefSeq" id="WP_012171057.1">
    <property type="nucleotide sequence ID" value="NC_009937.1"/>
</dbReference>
<dbReference type="SMR" id="A8IAN8"/>
<dbReference type="STRING" id="438753.AZC_2531"/>
<dbReference type="KEGG" id="azc:AZC_2531"/>
<dbReference type="eggNOG" id="COG0100">
    <property type="taxonomic scope" value="Bacteria"/>
</dbReference>
<dbReference type="HOGENOM" id="CLU_072439_5_0_5"/>
<dbReference type="Proteomes" id="UP000000270">
    <property type="component" value="Chromosome"/>
</dbReference>
<dbReference type="GO" id="GO:1990904">
    <property type="term" value="C:ribonucleoprotein complex"/>
    <property type="evidence" value="ECO:0007669"/>
    <property type="project" value="UniProtKB-KW"/>
</dbReference>
<dbReference type="GO" id="GO:0005840">
    <property type="term" value="C:ribosome"/>
    <property type="evidence" value="ECO:0007669"/>
    <property type="project" value="UniProtKB-KW"/>
</dbReference>
<dbReference type="GO" id="GO:0019843">
    <property type="term" value="F:rRNA binding"/>
    <property type="evidence" value="ECO:0007669"/>
    <property type="project" value="UniProtKB-UniRule"/>
</dbReference>
<dbReference type="GO" id="GO:0003735">
    <property type="term" value="F:structural constituent of ribosome"/>
    <property type="evidence" value="ECO:0007669"/>
    <property type="project" value="InterPro"/>
</dbReference>
<dbReference type="GO" id="GO:0006412">
    <property type="term" value="P:translation"/>
    <property type="evidence" value="ECO:0007669"/>
    <property type="project" value="UniProtKB-UniRule"/>
</dbReference>
<dbReference type="FunFam" id="3.30.420.80:FF:000001">
    <property type="entry name" value="30S ribosomal protein S11"/>
    <property type="match status" value="1"/>
</dbReference>
<dbReference type="Gene3D" id="3.30.420.80">
    <property type="entry name" value="Ribosomal protein S11"/>
    <property type="match status" value="1"/>
</dbReference>
<dbReference type="HAMAP" id="MF_01310">
    <property type="entry name" value="Ribosomal_uS11"/>
    <property type="match status" value="1"/>
</dbReference>
<dbReference type="InterPro" id="IPR001971">
    <property type="entry name" value="Ribosomal_uS11"/>
</dbReference>
<dbReference type="InterPro" id="IPR019981">
    <property type="entry name" value="Ribosomal_uS11_bac-type"/>
</dbReference>
<dbReference type="InterPro" id="IPR018102">
    <property type="entry name" value="Ribosomal_uS11_CS"/>
</dbReference>
<dbReference type="InterPro" id="IPR036967">
    <property type="entry name" value="Ribosomal_uS11_sf"/>
</dbReference>
<dbReference type="NCBIfam" id="NF003698">
    <property type="entry name" value="PRK05309.1"/>
    <property type="match status" value="1"/>
</dbReference>
<dbReference type="NCBIfam" id="TIGR03632">
    <property type="entry name" value="uS11_bact"/>
    <property type="match status" value="1"/>
</dbReference>
<dbReference type="PANTHER" id="PTHR11759">
    <property type="entry name" value="40S RIBOSOMAL PROTEIN S14/30S RIBOSOMAL PROTEIN S11"/>
    <property type="match status" value="1"/>
</dbReference>
<dbReference type="Pfam" id="PF00411">
    <property type="entry name" value="Ribosomal_S11"/>
    <property type="match status" value="1"/>
</dbReference>
<dbReference type="PIRSF" id="PIRSF002131">
    <property type="entry name" value="Ribosomal_S11"/>
    <property type="match status" value="1"/>
</dbReference>
<dbReference type="SUPFAM" id="SSF53137">
    <property type="entry name" value="Translational machinery components"/>
    <property type="match status" value="1"/>
</dbReference>
<dbReference type="PROSITE" id="PS00054">
    <property type="entry name" value="RIBOSOMAL_S11"/>
    <property type="match status" value="1"/>
</dbReference>
<sequence length="129" mass="13817">MAKEAARVKRRERKNIASGVAHVNASFNNTMITITDAQGNTISWSSAGAMGFKGSRKSTPYAAQLAAEDAARKAAEHGMRTLEVEVSGPGSGRESALRALQAAGFLVTSIRDVTPIPHNGCRPRKRRRV</sequence>